<evidence type="ECO:0000255" key="1">
    <source>
        <dbReference type="HAMAP-Rule" id="MF_00303"/>
    </source>
</evidence>
<accession>B8DTD1</accession>
<dbReference type="EC" id="5.2.1.8" evidence="1"/>
<dbReference type="EMBL" id="CP001213">
    <property type="protein sequence ID" value="ACL29260.1"/>
    <property type="molecule type" value="Genomic_DNA"/>
</dbReference>
<dbReference type="RefSeq" id="WP_012619893.1">
    <property type="nucleotide sequence ID" value="NC_011835.1"/>
</dbReference>
<dbReference type="SMR" id="B8DTD1"/>
<dbReference type="STRING" id="442563.BLA_0970"/>
<dbReference type="KEGG" id="bla:BLA_0970"/>
<dbReference type="PATRIC" id="fig|442563.4.peg.1013"/>
<dbReference type="HOGENOM" id="CLU_033058_3_0_11"/>
<dbReference type="Proteomes" id="UP000002456">
    <property type="component" value="Chromosome"/>
</dbReference>
<dbReference type="GO" id="GO:0005737">
    <property type="term" value="C:cytoplasm"/>
    <property type="evidence" value="ECO:0007669"/>
    <property type="project" value="UniProtKB-SubCell"/>
</dbReference>
<dbReference type="GO" id="GO:0003755">
    <property type="term" value="F:peptidyl-prolyl cis-trans isomerase activity"/>
    <property type="evidence" value="ECO:0007669"/>
    <property type="project" value="UniProtKB-UniRule"/>
</dbReference>
<dbReference type="GO" id="GO:0044183">
    <property type="term" value="F:protein folding chaperone"/>
    <property type="evidence" value="ECO:0007669"/>
    <property type="project" value="TreeGrafter"/>
</dbReference>
<dbReference type="GO" id="GO:0043022">
    <property type="term" value="F:ribosome binding"/>
    <property type="evidence" value="ECO:0007669"/>
    <property type="project" value="TreeGrafter"/>
</dbReference>
<dbReference type="GO" id="GO:0051083">
    <property type="term" value="P:'de novo' cotranslational protein folding"/>
    <property type="evidence" value="ECO:0007669"/>
    <property type="project" value="TreeGrafter"/>
</dbReference>
<dbReference type="GO" id="GO:0051301">
    <property type="term" value="P:cell division"/>
    <property type="evidence" value="ECO:0007669"/>
    <property type="project" value="UniProtKB-KW"/>
</dbReference>
<dbReference type="GO" id="GO:0061077">
    <property type="term" value="P:chaperone-mediated protein folding"/>
    <property type="evidence" value="ECO:0007669"/>
    <property type="project" value="TreeGrafter"/>
</dbReference>
<dbReference type="GO" id="GO:0015031">
    <property type="term" value="P:protein transport"/>
    <property type="evidence" value="ECO:0007669"/>
    <property type="project" value="UniProtKB-UniRule"/>
</dbReference>
<dbReference type="GO" id="GO:0043335">
    <property type="term" value="P:protein unfolding"/>
    <property type="evidence" value="ECO:0007669"/>
    <property type="project" value="TreeGrafter"/>
</dbReference>
<dbReference type="Gene3D" id="3.10.50.40">
    <property type="match status" value="1"/>
</dbReference>
<dbReference type="Gene3D" id="3.30.70.1050">
    <property type="entry name" value="Trigger factor ribosome-binding domain"/>
    <property type="match status" value="1"/>
</dbReference>
<dbReference type="Gene3D" id="1.10.3120.10">
    <property type="entry name" value="Trigger factor, C-terminal domain"/>
    <property type="match status" value="1"/>
</dbReference>
<dbReference type="HAMAP" id="MF_00303">
    <property type="entry name" value="Trigger_factor_Tig"/>
    <property type="match status" value="1"/>
</dbReference>
<dbReference type="InterPro" id="IPR046357">
    <property type="entry name" value="PPIase_dom_sf"/>
</dbReference>
<dbReference type="InterPro" id="IPR001179">
    <property type="entry name" value="PPIase_FKBP_dom"/>
</dbReference>
<dbReference type="InterPro" id="IPR005215">
    <property type="entry name" value="Trig_fac"/>
</dbReference>
<dbReference type="InterPro" id="IPR008880">
    <property type="entry name" value="Trigger_fac_C"/>
</dbReference>
<dbReference type="InterPro" id="IPR037041">
    <property type="entry name" value="Trigger_fac_C_sf"/>
</dbReference>
<dbReference type="InterPro" id="IPR008881">
    <property type="entry name" value="Trigger_fac_ribosome-bd_bac"/>
</dbReference>
<dbReference type="InterPro" id="IPR036611">
    <property type="entry name" value="Trigger_fac_ribosome-bd_sf"/>
</dbReference>
<dbReference type="InterPro" id="IPR027304">
    <property type="entry name" value="Trigger_fact/SurA_dom_sf"/>
</dbReference>
<dbReference type="NCBIfam" id="TIGR00115">
    <property type="entry name" value="tig"/>
    <property type="match status" value="1"/>
</dbReference>
<dbReference type="PANTHER" id="PTHR30560">
    <property type="entry name" value="TRIGGER FACTOR CHAPERONE AND PEPTIDYL-PROLYL CIS/TRANS ISOMERASE"/>
    <property type="match status" value="1"/>
</dbReference>
<dbReference type="PANTHER" id="PTHR30560:SF3">
    <property type="entry name" value="TRIGGER FACTOR-LIKE PROTEIN TIG, CHLOROPLASTIC"/>
    <property type="match status" value="1"/>
</dbReference>
<dbReference type="Pfam" id="PF00254">
    <property type="entry name" value="FKBP_C"/>
    <property type="match status" value="1"/>
</dbReference>
<dbReference type="Pfam" id="PF05698">
    <property type="entry name" value="Trigger_C"/>
    <property type="match status" value="1"/>
</dbReference>
<dbReference type="Pfam" id="PF05697">
    <property type="entry name" value="Trigger_N"/>
    <property type="match status" value="1"/>
</dbReference>
<dbReference type="PIRSF" id="PIRSF003095">
    <property type="entry name" value="Trigger_factor"/>
    <property type="match status" value="1"/>
</dbReference>
<dbReference type="SUPFAM" id="SSF54534">
    <property type="entry name" value="FKBP-like"/>
    <property type="match status" value="1"/>
</dbReference>
<dbReference type="SUPFAM" id="SSF109998">
    <property type="entry name" value="Triger factor/SurA peptide-binding domain-like"/>
    <property type="match status" value="1"/>
</dbReference>
<dbReference type="SUPFAM" id="SSF102735">
    <property type="entry name" value="Trigger factor ribosome-binding domain"/>
    <property type="match status" value="1"/>
</dbReference>
<dbReference type="PROSITE" id="PS50059">
    <property type="entry name" value="FKBP_PPIASE"/>
    <property type="match status" value="1"/>
</dbReference>
<proteinExistence type="inferred from homology"/>
<reference key="1">
    <citation type="journal article" date="2009" name="J. Bacteriol.">
        <title>Genome sequence of the probiotic bacterium Bifidobacterium animalis subsp. lactis AD011.</title>
        <authorList>
            <person name="Kim J.F."/>
            <person name="Jeong H."/>
            <person name="Yu D.S."/>
            <person name="Choi S.-H."/>
            <person name="Hur C.-G."/>
            <person name="Park M.-S."/>
            <person name="Yoon S.H."/>
            <person name="Kim D.-W."/>
            <person name="Ji G.E."/>
            <person name="Park H.-S."/>
            <person name="Oh T.K."/>
        </authorList>
    </citation>
    <scope>NUCLEOTIDE SEQUENCE [LARGE SCALE GENOMIC DNA]</scope>
    <source>
        <strain>AD011</strain>
    </source>
</reference>
<keyword id="KW-0131">Cell cycle</keyword>
<keyword id="KW-0132">Cell division</keyword>
<keyword id="KW-0143">Chaperone</keyword>
<keyword id="KW-0963">Cytoplasm</keyword>
<keyword id="KW-0413">Isomerase</keyword>
<keyword id="KW-1185">Reference proteome</keyword>
<keyword id="KW-0697">Rotamase</keyword>
<sequence length="461" mass="50081">MKISVRNLEPTKAKLTITVDQDEFDPYLEDARKEIAEQITVPGFRKGHVPGKLVDQRVGFGAVAGEAVNKALPDMYAKALDEKDIRPMDQPQIEVVEMPQSAADDTKLKFTATVERRPEFELPNLEGLEIAVDKAEVSDDDVNNRLGTLRQRFATLVGVDRPAQKGDFANIDLTAQTDGETVDSQEGVSYEIGSGTMLDGLDEALEGLSAGEETTFESTLEGGDHEGEKAQVKVKVNSVKAEELPELDDDFAQEASEFDTLDELKAEIRKNIEADAEGRQATIARDAFIETLEEGLDIPLPKGVRNNMVEQQLKSMGVEAGKATSDQKKEAEEAVDKMLKDQMVLDALAEKLDVQVSQSDVFNFLGSIAQQYGMDPNMFIQALMRNGQIGSARREVARSRACSPGCVRWKFTVDGEPLDLSGFLGSEEAEAQAEEDESVAAAAAAAAVADNLTSDDGTDAE</sequence>
<organism>
    <name type="scientific">Bifidobacterium animalis subsp. lactis (strain AD011)</name>
    <dbReference type="NCBI Taxonomy" id="442563"/>
    <lineage>
        <taxon>Bacteria</taxon>
        <taxon>Bacillati</taxon>
        <taxon>Actinomycetota</taxon>
        <taxon>Actinomycetes</taxon>
        <taxon>Bifidobacteriales</taxon>
        <taxon>Bifidobacteriaceae</taxon>
        <taxon>Bifidobacterium</taxon>
    </lineage>
</organism>
<gene>
    <name evidence="1" type="primary">tig</name>
    <name type="ordered locus">BLA_0970</name>
</gene>
<protein>
    <recommendedName>
        <fullName evidence="1">Trigger factor</fullName>
        <shortName evidence="1">TF</shortName>
        <ecNumber evidence="1">5.2.1.8</ecNumber>
    </recommendedName>
    <alternativeName>
        <fullName evidence="1">PPIase</fullName>
    </alternativeName>
</protein>
<feature type="chain" id="PRO_1000198143" description="Trigger factor">
    <location>
        <begin position="1"/>
        <end position="461"/>
    </location>
</feature>
<feature type="domain" description="PPIase FKBP-type" evidence="1">
    <location>
        <begin position="166"/>
        <end position="245"/>
    </location>
</feature>
<comment type="function">
    <text evidence="1">Involved in protein export. Acts as a chaperone by maintaining the newly synthesized protein in an open conformation. Functions as a peptidyl-prolyl cis-trans isomerase.</text>
</comment>
<comment type="catalytic activity">
    <reaction evidence="1">
        <text>[protein]-peptidylproline (omega=180) = [protein]-peptidylproline (omega=0)</text>
        <dbReference type="Rhea" id="RHEA:16237"/>
        <dbReference type="Rhea" id="RHEA-COMP:10747"/>
        <dbReference type="Rhea" id="RHEA-COMP:10748"/>
        <dbReference type="ChEBI" id="CHEBI:83833"/>
        <dbReference type="ChEBI" id="CHEBI:83834"/>
        <dbReference type="EC" id="5.2.1.8"/>
    </reaction>
</comment>
<comment type="subcellular location">
    <subcellularLocation>
        <location>Cytoplasm</location>
    </subcellularLocation>
    <text evidence="1">About half TF is bound to the ribosome near the polypeptide exit tunnel while the other half is free in the cytoplasm.</text>
</comment>
<comment type="domain">
    <text evidence="1">Consists of 3 domains; the N-terminus binds the ribosome, the middle domain has PPIase activity, while the C-terminus has intrinsic chaperone activity on its own.</text>
</comment>
<comment type="similarity">
    <text evidence="1">Belongs to the FKBP-type PPIase family. Tig subfamily.</text>
</comment>
<name>TIG_BIFA0</name>